<comment type="subcellular location">
    <subcellularLocation>
        <location evidence="1">Secreted</location>
    </subcellularLocation>
</comment>
<comment type="tissue specificity">
    <text evidence="3 4">Expressed specifically in placenta. Expressed in both trophoblast giant cells and spongiotrophoblast cells.</text>
</comment>
<comment type="developmental stage">
    <text evidence="3">Low level on day 8, abundant on days 10 to 14, and decreases by day 16.</text>
</comment>
<comment type="similarity">
    <text evidence="5">Belongs to the somatotropin/prolactin family.</text>
</comment>
<evidence type="ECO:0000250" key="1"/>
<evidence type="ECO:0000255" key="2"/>
<evidence type="ECO:0000269" key="3">
    <source>
    </source>
</evidence>
<evidence type="ECO:0000269" key="4">
    <source>
    </source>
</evidence>
<evidence type="ECO:0000305" key="5"/>
<organism>
    <name type="scientific">Mus musculus</name>
    <name type="common">Mouse</name>
    <dbReference type="NCBI Taxonomy" id="10090"/>
    <lineage>
        <taxon>Eukaryota</taxon>
        <taxon>Metazoa</taxon>
        <taxon>Chordata</taxon>
        <taxon>Craniata</taxon>
        <taxon>Vertebrata</taxon>
        <taxon>Euteleostomi</taxon>
        <taxon>Mammalia</taxon>
        <taxon>Eutheria</taxon>
        <taxon>Euarchontoglires</taxon>
        <taxon>Glires</taxon>
        <taxon>Rodentia</taxon>
        <taxon>Myomorpha</taxon>
        <taxon>Muroidea</taxon>
        <taxon>Muridae</taxon>
        <taxon>Murinae</taxon>
        <taxon>Mus</taxon>
        <taxon>Mus</taxon>
    </lineage>
</organism>
<accession>O35256</accession>
<name>PR4A1_MOUSE</name>
<sequence>MHLSLTPQWSSWTVLLLLVSNLLLWENTASAMRAKRLNVHDYTTFGNTWNQAIQLSQSMNHRISELSTHFKVFYAQGRGFEKRTTRCHTSSLSSPENKEQAQKIQLEVLLGLAHSLLQAWVNPLYHLWAEMCERLGSTPPILSKALEVKTLNRNLLETIEKIAFKGNFEINENGNYTAWSELELLQSPNRDTRYFAFHNLFHCLKKDSSHVEMYLKLLKCRLIQSNC</sequence>
<reference key="1">
    <citation type="journal article" date="1997" name="Endocrinology">
        <title>Three new members of the mouse prolactin/growth hormone family are homologous to proteins expressed in the rat.</title>
        <authorList>
            <person name="Lin J."/>
            <person name="Poole J."/>
            <person name="Linzer D.I."/>
        </authorList>
    </citation>
    <scope>NUCLEOTIDE SEQUENCE [MRNA]</scope>
    <scope>TISSUE SPECIFICITY</scope>
    <scope>DEVELOPMENTAL STAGE</scope>
    <source>
        <strain>C57BL/6J</strain>
    </source>
</reference>
<reference key="2">
    <citation type="journal article" date="1998" name="Biol. Reprod.">
        <title>Homologues for prolactin-like proteins A and B are present in the mouse.</title>
        <authorList>
            <person name="Mueller H."/>
            <person name="Ishimura R."/>
            <person name="Orwig K.E."/>
            <person name="Liu B."/>
            <person name="Soares M.J."/>
        </authorList>
    </citation>
    <scope>NUCLEOTIDE SEQUENCE [MRNA]</scope>
    <scope>TISSUE SPECIFICITY</scope>
</reference>
<reference key="3">
    <citation type="journal article" date="2005" name="Science">
        <title>The transcriptional landscape of the mammalian genome.</title>
        <authorList>
            <person name="Carninci P."/>
            <person name="Kasukawa T."/>
            <person name="Katayama S."/>
            <person name="Gough J."/>
            <person name="Frith M.C."/>
            <person name="Maeda N."/>
            <person name="Oyama R."/>
            <person name="Ravasi T."/>
            <person name="Lenhard B."/>
            <person name="Wells C."/>
            <person name="Kodzius R."/>
            <person name="Shimokawa K."/>
            <person name="Bajic V.B."/>
            <person name="Brenner S.E."/>
            <person name="Batalov S."/>
            <person name="Forrest A.R."/>
            <person name="Zavolan M."/>
            <person name="Davis M.J."/>
            <person name="Wilming L.G."/>
            <person name="Aidinis V."/>
            <person name="Allen J.E."/>
            <person name="Ambesi-Impiombato A."/>
            <person name="Apweiler R."/>
            <person name="Aturaliya R.N."/>
            <person name="Bailey T.L."/>
            <person name="Bansal M."/>
            <person name="Baxter L."/>
            <person name="Beisel K.W."/>
            <person name="Bersano T."/>
            <person name="Bono H."/>
            <person name="Chalk A.M."/>
            <person name="Chiu K.P."/>
            <person name="Choudhary V."/>
            <person name="Christoffels A."/>
            <person name="Clutterbuck D.R."/>
            <person name="Crowe M.L."/>
            <person name="Dalla E."/>
            <person name="Dalrymple B.P."/>
            <person name="de Bono B."/>
            <person name="Della Gatta G."/>
            <person name="di Bernardo D."/>
            <person name="Down T."/>
            <person name="Engstrom P."/>
            <person name="Fagiolini M."/>
            <person name="Faulkner G."/>
            <person name="Fletcher C.F."/>
            <person name="Fukushima T."/>
            <person name="Furuno M."/>
            <person name="Futaki S."/>
            <person name="Gariboldi M."/>
            <person name="Georgii-Hemming P."/>
            <person name="Gingeras T.R."/>
            <person name="Gojobori T."/>
            <person name="Green R.E."/>
            <person name="Gustincich S."/>
            <person name="Harbers M."/>
            <person name="Hayashi Y."/>
            <person name="Hensch T.K."/>
            <person name="Hirokawa N."/>
            <person name="Hill D."/>
            <person name="Huminiecki L."/>
            <person name="Iacono M."/>
            <person name="Ikeo K."/>
            <person name="Iwama A."/>
            <person name="Ishikawa T."/>
            <person name="Jakt M."/>
            <person name="Kanapin A."/>
            <person name="Katoh M."/>
            <person name="Kawasawa Y."/>
            <person name="Kelso J."/>
            <person name="Kitamura H."/>
            <person name="Kitano H."/>
            <person name="Kollias G."/>
            <person name="Krishnan S.P."/>
            <person name="Kruger A."/>
            <person name="Kummerfeld S.K."/>
            <person name="Kurochkin I.V."/>
            <person name="Lareau L.F."/>
            <person name="Lazarevic D."/>
            <person name="Lipovich L."/>
            <person name="Liu J."/>
            <person name="Liuni S."/>
            <person name="McWilliam S."/>
            <person name="Madan Babu M."/>
            <person name="Madera M."/>
            <person name="Marchionni L."/>
            <person name="Matsuda H."/>
            <person name="Matsuzawa S."/>
            <person name="Miki H."/>
            <person name="Mignone F."/>
            <person name="Miyake S."/>
            <person name="Morris K."/>
            <person name="Mottagui-Tabar S."/>
            <person name="Mulder N."/>
            <person name="Nakano N."/>
            <person name="Nakauchi H."/>
            <person name="Ng P."/>
            <person name="Nilsson R."/>
            <person name="Nishiguchi S."/>
            <person name="Nishikawa S."/>
            <person name="Nori F."/>
            <person name="Ohara O."/>
            <person name="Okazaki Y."/>
            <person name="Orlando V."/>
            <person name="Pang K.C."/>
            <person name="Pavan W.J."/>
            <person name="Pavesi G."/>
            <person name="Pesole G."/>
            <person name="Petrovsky N."/>
            <person name="Piazza S."/>
            <person name="Reed J."/>
            <person name="Reid J.F."/>
            <person name="Ring B.Z."/>
            <person name="Ringwald M."/>
            <person name="Rost B."/>
            <person name="Ruan Y."/>
            <person name="Salzberg S.L."/>
            <person name="Sandelin A."/>
            <person name="Schneider C."/>
            <person name="Schoenbach C."/>
            <person name="Sekiguchi K."/>
            <person name="Semple C.A."/>
            <person name="Seno S."/>
            <person name="Sessa L."/>
            <person name="Sheng Y."/>
            <person name="Shibata Y."/>
            <person name="Shimada H."/>
            <person name="Shimada K."/>
            <person name="Silva D."/>
            <person name="Sinclair B."/>
            <person name="Sperling S."/>
            <person name="Stupka E."/>
            <person name="Sugiura K."/>
            <person name="Sultana R."/>
            <person name="Takenaka Y."/>
            <person name="Taki K."/>
            <person name="Tammoja K."/>
            <person name="Tan S.L."/>
            <person name="Tang S."/>
            <person name="Taylor M.S."/>
            <person name="Tegner J."/>
            <person name="Teichmann S.A."/>
            <person name="Ueda H.R."/>
            <person name="van Nimwegen E."/>
            <person name="Verardo R."/>
            <person name="Wei C.L."/>
            <person name="Yagi K."/>
            <person name="Yamanishi H."/>
            <person name="Zabarovsky E."/>
            <person name="Zhu S."/>
            <person name="Zimmer A."/>
            <person name="Hide W."/>
            <person name="Bult C."/>
            <person name="Grimmond S.M."/>
            <person name="Teasdale R.D."/>
            <person name="Liu E.T."/>
            <person name="Brusic V."/>
            <person name="Quackenbush J."/>
            <person name="Wahlestedt C."/>
            <person name="Mattick J.S."/>
            <person name="Hume D.A."/>
            <person name="Kai C."/>
            <person name="Sasaki D."/>
            <person name="Tomaru Y."/>
            <person name="Fukuda S."/>
            <person name="Kanamori-Katayama M."/>
            <person name="Suzuki M."/>
            <person name="Aoki J."/>
            <person name="Arakawa T."/>
            <person name="Iida J."/>
            <person name="Imamura K."/>
            <person name="Itoh M."/>
            <person name="Kato T."/>
            <person name="Kawaji H."/>
            <person name="Kawagashira N."/>
            <person name="Kawashima T."/>
            <person name="Kojima M."/>
            <person name="Kondo S."/>
            <person name="Konno H."/>
            <person name="Nakano K."/>
            <person name="Ninomiya N."/>
            <person name="Nishio T."/>
            <person name="Okada M."/>
            <person name="Plessy C."/>
            <person name="Shibata K."/>
            <person name="Shiraki T."/>
            <person name="Suzuki S."/>
            <person name="Tagami M."/>
            <person name="Waki K."/>
            <person name="Watahiki A."/>
            <person name="Okamura-Oho Y."/>
            <person name="Suzuki H."/>
            <person name="Kawai J."/>
            <person name="Hayashizaki Y."/>
        </authorList>
    </citation>
    <scope>NUCLEOTIDE SEQUENCE [LARGE SCALE MRNA]</scope>
    <source>
        <strain>C57BL/6J</strain>
    </source>
</reference>
<reference key="4">
    <citation type="journal article" date="2009" name="PLoS Biol.">
        <title>Lineage-specific biology revealed by a finished genome assembly of the mouse.</title>
        <authorList>
            <person name="Church D.M."/>
            <person name="Goodstadt L."/>
            <person name="Hillier L.W."/>
            <person name="Zody M.C."/>
            <person name="Goldstein S."/>
            <person name="She X."/>
            <person name="Bult C.J."/>
            <person name="Agarwala R."/>
            <person name="Cherry J.L."/>
            <person name="DiCuccio M."/>
            <person name="Hlavina W."/>
            <person name="Kapustin Y."/>
            <person name="Meric P."/>
            <person name="Maglott D."/>
            <person name="Birtle Z."/>
            <person name="Marques A.C."/>
            <person name="Graves T."/>
            <person name="Zhou S."/>
            <person name="Teague B."/>
            <person name="Potamousis K."/>
            <person name="Churas C."/>
            <person name="Place M."/>
            <person name="Herschleb J."/>
            <person name="Runnheim R."/>
            <person name="Forrest D."/>
            <person name="Amos-Landgraf J."/>
            <person name="Schwartz D.C."/>
            <person name="Cheng Z."/>
            <person name="Lindblad-Toh K."/>
            <person name="Eichler E.E."/>
            <person name="Ponting C.P."/>
        </authorList>
    </citation>
    <scope>NUCLEOTIDE SEQUENCE [LARGE SCALE GENOMIC DNA]</scope>
    <source>
        <strain>C57BL/6J</strain>
    </source>
</reference>
<reference key="5">
    <citation type="journal article" date="2004" name="Genome Res.">
        <title>The status, quality, and expansion of the NIH full-length cDNA project: the Mammalian Gene Collection (MGC).</title>
        <authorList>
            <consortium name="The MGC Project Team"/>
        </authorList>
    </citation>
    <scope>NUCLEOTIDE SEQUENCE [LARGE SCALE MRNA]</scope>
    <source>
        <strain>C57BL/6J</strain>
        <tissue>Embryo</tissue>
    </source>
</reference>
<keyword id="KW-1015">Disulfide bond</keyword>
<keyword id="KW-0325">Glycoprotein</keyword>
<keyword id="KW-0372">Hormone</keyword>
<keyword id="KW-1185">Reference proteome</keyword>
<keyword id="KW-0964">Secreted</keyword>
<keyword id="KW-0732">Signal</keyword>
<feature type="signal peptide" evidence="2">
    <location>
        <begin position="1"/>
        <end position="31"/>
    </location>
</feature>
<feature type="chain" id="PRO_0000045168" description="Prolactin-4A1">
    <location>
        <begin position="32"/>
        <end position="227"/>
    </location>
</feature>
<feature type="glycosylation site" description="N-linked (GlcNAc...) asparagine" evidence="2">
    <location>
        <position position="175"/>
    </location>
</feature>
<feature type="disulfide bond" evidence="1">
    <location>
        <begin position="87"/>
        <end position="203"/>
    </location>
</feature>
<feature type="disulfide bond" evidence="1">
    <location>
        <begin position="220"/>
        <end position="227"/>
    </location>
</feature>
<dbReference type="EMBL" id="AF011383">
    <property type="protein sequence ID" value="AAB92399.1"/>
    <property type="molecule type" value="mRNA"/>
</dbReference>
<dbReference type="EMBL" id="AF015562">
    <property type="protein sequence ID" value="AAB68824.1"/>
    <property type="molecule type" value="mRNA"/>
</dbReference>
<dbReference type="EMBL" id="AK141285">
    <property type="protein sequence ID" value="BAE24636.1"/>
    <property type="molecule type" value="mRNA"/>
</dbReference>
<dbReference type="EMBL" id="AK164009">
    <property type="protein sequence ID" value="BAE37587.1"/>
    <property type="molecule type" value="mRNA"/>
</dbReference>
<dbReference type="EMBL" id="AL590616">
    <property type="status" value="NOT_ANNOTATED_CDS"/>
    <property type="molecule type" value="Genomic_DNA"/>
</dbReference>
<dbReference type="EMBL" id="AL606783">
    <property type="status" value="NOT_ANNOTATED_CDS"/>
    <property type="molecule type" value="Genomic_DNA"/>
</dbReference>
<dbReference type="EMBL" id="BC052218">
    <property type="protein sequence ID" value="AAH52218.1"/>
    <property type="molecule type" value="mRNA"/>
</dbReference>
<dbReference type="CCDS" id="CCDS26409.1"/>
<dbReference type="RefSeq" id="NP_035295.1">
    <property type="nucleotide sequence ID" value="NM_011165.4"/>
</dbReference>
<dbReference type="SMR" id="O35256"/>
<dbReference type="FunCoup" id="O35256">
    <property type="interactions" value="118"/>
</dbReference>
<dbReference type="STRING" id="10090.ENSMUSP00000021779"/>
<dbReference type="GlyCosmos" id="O35256">
    <property type="glycosylation" value="1 site, No reported glycans"/>
</dbReference>
<dbReference type="GlyGen" id="O35256">
    <property type="glycosylation" value="1 site"/>
</dbReference>
<dbReference type="PaxDb" id="10090-ENSMUSP00000021779"/>
<dbReference type="DNASU" id="19110"/>
<dbReference type="Ensembl" id="ENSMUST00000021779.8">
    <property type="protein sequence ID" value="ENSMUSP00000021779.7"/>
    <property type="gene ID" value="ENSMUSG00000005891.8"/>
</dbReference>
<dbReference type="GeneID" id="19110"/>
<dbReference type="KEGG" id="mmu:19110"/>
<dbReference type="UCSC" id="uc007pyg.1">
    <property type="organism name" value="mouse"/>
</dbReference>
<dbReference type="AGR" id="MGI:1206587"/>
<dbReference type="CTD" id="19110"/>
<dbReference type="MGI" id="MGI:1206587">
    <property type="gene designation" value="Prl4a1"/>
</dbReference>
<dbReference type="VEuPathDB" id="HostDB:ENSMUSG00000005891"/>
<dbReference type="eggNOG" id="ENOG502QYU3">
    <property type="taxonomic scope" value="Eukaryota"/>
</dbReference>
<dbReference type="GeneTree" id="ENSGT00950000182818"/>
<dbReference type="HOGENOM" id="CLU_088274_0_1_1"/>
<dbReference type="InParanoid" id="O35256"/>
<dbReference type="OMA" id="YWSMSQD"/>
<dbReference type="OrthoDB" id="9946219at2759"/>
<dbReference type="PhylomeDB" id="O35256"/>
<dbReference type="TreeFam" id="TF332592"/>
<dbReference type="BioGRID-ORCS" id="19110">
    <property type="hits" value="2 hits in 75 CRISPR screens"/>
</dbReference>
<dbReference type="PRO" id="PR:O35256"/>
<dbReference type="Proteomes" id="UP000000589">
    <property type="component" value="Chromosome 13"/>
</dbReference>
<dbReference type="RNAct" id="O35256">
    <property type="molecule type" value="protein"/>
</dbReference>
<dbReference type="Bgee" id="ENSMUSG00000005891">
    <property type="expression patterns" value="Expressed in ectoplacental cone and 18 other cell types or tissues"/>
</dbReference>
<dbReference type="ExpressionAtlas" id="O35256">
    <property type="expression patterns" value="baseline and differential"/>
</dbReference>
<dbReference type="GO" id="GO:0005576">
    <property type="term" value="C:extracellular region"/>
    <property type="evidence" value="ECO:0007669"/>
    <property type="project" value="UniProtKB-SubCell"/>
</dbReference>
<dbReference type="GO" id="GO:0005179">
    <property type="term" value="F:hormone activity"/>
    <property type="evidence" value="ECO:0007669"/>
    <property type="project" value="UniProtKB-KW"/>
</dbReference>
<dbReference type="GO" id="GO:0005148">
    <property type="term" value="F:prolactin receptor binding"/>
    <property type="evidence" value="ECO:0000250"/>
    <property type="project" value="MGI"/>
</dbReference>
<dbReference type="GO" id="GO:0001666">
    <property type="term" value="P:response to hypoxia"/>
    <property type="evidence" value="ECO:0000315"/>
    <property type="project" value="MGI"/>
</dbReference>
<dbReference type="CDD" id="cd10288">
    <property type="entry name" value="prolactin_like"/>
    <property type="match status" value="1"/>
</dbReference>
<dbReference type="Gene3D" id="1.20.1250.10">
    <property type="match status" value="1"/>
</dbReference>
<dbReference type="InterPro" id="IPR009079">
    <property type="entry name" value="4_helix_cytokine-like_core"/>
</dbReference>
<dbReference type="InterPro" id="IPR001400">
    <property type="entry name" value="Somatotropin/Prolactin"/>
</dbReference>
<dbReference type="InterPro" id="IPR018116">
    <property type="entry name" value="Somatotropin_CS"/>
</dbReference>
<dbReference type="PANTHER" id="PTHR11417:SF11">
    <property type="entry name" value="PROLACTIN-4A1"/>
    <property type="match status" value="1"/>
</dbReference>
<dbReference type="PANTHER" id="PTHR11417">
    <property type="entry name" value="SOMATOTROPIN,PROLACTIN"/>
    <property type="match status" value="1"/>
</dbReference>
<dbReference type="Pfam" id="PF00103">
    <property type="entry name" value="Hormone_1"/>
    <property type="match status" value="1"/>
</dbReference>
<dbReference type="PRINTS" id="PR00836">
    <property type="entry name" value="SOMATOTROPIN"/>
</dbReference>
<dbReference type="SUPFAM" id="SSF47266">
    <property type="entry name" value="4-helical cytokines"/>
    <property type="match status" value="1"/>
</dbReference>
<dbReference type="PROSITE" id="PS00266">
    <property type="entry name" value="SOMATOTROPIN_1"/>
    <property type="match status" value="1"/>
</dbReference>
<dbReference type="PROSITE" id="PS00338">
    <property type="entry name" value="SOMATOTROPIN_2"/>
    <property type="match status" value="1"/>
</dbReference>
<protein>
    <recommendedName>
        <fullName>Prolactin-4A1</fullName>
    </recommendedName>
    <alternativeName>
        <fullName>Placental prolactin-like protein A</fullName>
        <shortName>PLP-A</shortName>
        <shortName>PRL-like protein A</shortName>
    </alternativeName>
</protein>
<proteinExistence type="evidence at transcript level"/>
<gene>
    <name type="primary">Prl4a1</name>
    <name type="synonym">Prlpa</name>
</gene>